<reference key="1">
    <citation type="journal article" date="2008" name="J. Bacteriol.">
        <title>Complete genome sequence of uropathogenic Proteus mirabilis, a master of both adherence and motility.</title>
        <authorList>
            <person name="Pearson M.M."/>
            <person name="Sebaihia M."/>
            <person name="Churcher C."/>
            <person name="Quail M.A."/>
            <person name="Seshasayee A.S."/>
            <person name="Luscombe N.M."/>
            <person name="Abdellah Z."/>
            <person name="Arrosmith C."/>
            <person name="Atkin B."/>
            <person name="Chillingworth T."/>
            <person name="Hauser H."/>
            <person name="Jagels K."/>
            <person name="Moule S."/>
            <person name="Mungall K."/>
            <person name="Norbertczak H."/>
            <person name="Rabbinowitsch E."/>
            <person name="Walker D."/>
            <person name="Whithead S."/>
            <person name="Thomson N.R."/>
            <person name="Rather P.N."/>
            <person name="Parkhill J."/>
            <person name="Mobley H.L.T."/>
        </authorList>
    </citation>
    <scope>NUCLEOTIDE SEQUENCE [LARGE SCALE GENOMIC DNA]</scope>
    <source>
        <strain>HI4320</strain>
    </source>
</reference>
<keyword id="KW-1185">Reference proteome</keyword>
<keyword id="KW-0687">Ribonucleoprotein</keyword>
<keyword id="KW-0689">Ribosomal protein</keyword>
<keyword id="KW-0694">RNA-binding</keyword>
<keyword id="KW-0699">rRNA-binding</keyword>
<sequence>MAAKIRREDEVIVLTGKDKGKRGKVKQVLSSGKVIVEGINLVKKHQKPVPALNQPGGIVEKEAAIQVSNVAIFNAATGKADRVGFRFEDGKKVRFFKSNKETIK</sequence>
<dbReference type="EMBL" id="AM942759">
    <property type="protein sequence ID" value="CAR46399.1"/>
    <property type="molecule type" value="Genomic_DNA"/>
</dbReference>
<dbReference type="RefSeq" id="WP_004246953.1">
    <property type="nucleotide sequence ID" value="NC_010554.1"/>
</dbReference>
<dbReference type="SMR" id="B4F1J5"/>
<dbReference type="EnsemblBacteria" id="CAR46399">
    <property type="protein sequence ID" value="CAR46399"/>
    <property type="gene ID" value="PMI3266"/>
</dbReference>
<dbReference type="GeneID" id="6800523"/>
<dbReference type="KEGG" id="pmr:PMI3266"/>
<dbReference type="eggNOG" id="COG0198">
    <property type="taxonomic scope" value="Bacteria"/>
</dbReference>
<dbReference type="HOGENOM" id="CLU_093315_2_2_6"/>
<dbReference type="Proteomes" id="UP000008319">
    <property type="component" value="Chromosome"/>
</dbReference>
<dbReference type="GO" id="GO:1990904">
    <property type="term" value="C:ribonucleoprotein complex"/>
    <property type="evidence" value="ECO:0007669"/>
    <property type="project" value="UniProtKB-KW"/>
</dbReference>
<dbReference type="GO" id="GO:0005840">
    <property type="term" value="C:ribosome"/>
    <property type="evidence" value="ECO:0007669"/>
    <property type="project" value="UniProtKB-KW"/>
</dbReference>
<dbReference type="GO" id="GO:0019843">
    <property type="term" value="F:rRNA binding"/>
    <property type="evidence" value="ECO:0007669"/>
    <property type="project" value="UniProtKB-UniRule"/>
</dbReference>
<dbReference type="GO" id="GO:0003735">
    <property type="term" value="F:structural constituent of ribosome"/>
    <property type="evidence" value="ECO:0007669"/>
    <property type="project" value="InterPro"/>
</dbReference>
<dbReference type="GO" id="GO:0006412">
    <property type="term" value="P:translation"/>
    <property type="evidence" value="ECO:0007669"/>
    <property type="project" value="UniProtKB-UniRule"/>
</dbReference>
<dbReference type="CDD" id="cd06089">
    <property type="entry name" value="KOW_RPL26"/>
    <property type="match status" value="1"/>
</dbReference>
<dbReference type="FunFam" id="2.30.30.30:FF:000004">
    <property type="entry name" value="50S ribosomal protein L24"/>
    <property type="match status" value="1"/>
</dbReference>
<dbReference type="Gene3D" id="2.30.30.30">
    <property type="match status" value="1"/>
</dbReference>
<dbReference type="HAMAP" id="MF_01326_B">
    <property type="entry name" value="Ribosomal_uL24_B"/>
    <property type="match status" value="1"/>
</dbReference>
<dbReference type="InterPro" id="IPR005824">
    <property type="entry name" value="KOW"/>
</dbReference>
<dbReference type="InterPro" id="IPR014722">
    <property type="entry name" value="Rib_uL2_dom2"/>
</dbReference>
<dbReference type="InterPro" id="IPR003256">
    <property type="entry name" value="Ribosomal_uL24"/>
</dbReference>
<dbReference type="InterPro" id="IPR005825">
    <property type="entry name" value="Ribosomal_uL24_CS"/>
</dbReference>
<dbReference type="InterPro" id="IPR041988">
    <property type="entry name" value="Ribosomal_uL24_KOW"/>
</dbReference>
<dbReference type="InterPro" id="IPR008991">
    <property type="entry name" value="Translation_prot_SH3-like_sf"/>
</dbReference>
<dbReference type="NCBIfam" id="TIGR01079">
    <property type="entry name" value="rplX_bact"/>
    <property type="match status" value="1"/>
</dbReference>
<dbReference type="PANTHER" id="PTHR12903">
    <property type="entry name" value="MITOCHONDRIAL RIBOSOMAL PROTEIN L24"/>
    <property type="match status" value="1"/>
</dbReference>
<dbReference type="Pfam" id="PF00467">
    <property type="entry name" value="KOW"/>
    <property type="match status" value="1"/>
</dbReference>
<dbReference type="Pfam" id="PF17136">
    <property type="entry name" value="ribosomal_L24"/>
    <property type="match status" value="1"/>
</dbReference>
<dbReference type="SUPFAM" id="SSF50104">
    <property type="entry name" value="Translation proteins SH3-like domain"/>
    <property type="match status" value="1"/>
</dbReference>
<dbReference type="PROSITE" id="PS01108">
    <property type="entry name" value="RIBOSOMAL_L24"/>
    <property type="match status" value="1"/>
</dbReference>
<comment type="function">
    <text evidence="1">One of two assembly initiator proteins, it binds directly to the 5'-end of the 23S rRNA, where it nucleates assembly of the 50S subunit.</text>
</comment>
<comment type="function">
    <text evidence="1">One of the proteins that surrounds the polypeptide exit tunnel on the outside of the subunit.</text>
</comment>
<comment type="subunit">
    <text evidence="1">Part of the 50S ribosomal subunit.</text>
</comment>
<comment type="similarity">
    <text evidence="1">Belongs to the universal ribosomal protein uL24 family.</text>
</comment>
<protein>
    <recommendedName>
        <fullName evidence="1">Large ribosomal subunit protein uL24</fullName>
    </recommendedName>
    <alternativeName>
        <fullName evidence="2">50S ribosomal protein L24</fullName>
    </alternativeName>
</protein>
<organism>
    <name type="scientific">Proteus mirabilis (strain HI4320)</name>
    <dbReference type="NCBI Taxonomy" id="529507"/>
    <lineage>
        <taxon>Bacteria</taxon>
        <taxon>Pseudomonadati</taxon>
        <taxon>Pseudomonadota</taxon>
        <taxon>Gammaproteobacteria</taxon>
        <taxon>Enterobacterales</taxon>
        <taxon>Morganellaceae</taxon>
        <taxon>Proteus</taxon>
    </lineage>
</organism>
<feature type="chain" id="PRO_1000142023" description="Large ribosomal subunit protein uL24">
    <location>
        <begin position="1"/>
        <end position="104"/>
    </location>
</feature>
<evidence type="ECO:0000255" key="1">
    <source>
        <dbReference type="HAMAP-Rule" id="MF_01326"/>
    </source>
</evidence>
<evidence type="ECO:0000305" key="2"/>
<accession>B4F1J5</accession>
<gene>
    <name evidence="1" type="primary">rplX</name>
    <name type="ordered locus">PMI3266</name>
</gene>
<name>RL24_PROMH</name>
<proteinExistence type="inferred from homology"/>